<organism>
    <name type="scientific">Homo sapiens</name>
    <name type="common">Human</name>
    <dbReference type="NCBI Taxonomy" id="9606"/>
    <lineage>
        <taxon>Eukaryota</taxon>
        <taxon>Metazoa</taxon>
        <taxon>Chordata</taxon>
        <taxon>Craniata</taxon>
        <taxon>Vertebrata</taxon>
        <taxon>Euteleostomi</taxon>
        <taxon>Mammalia</taxon>
        <taxon>Eutheria</taxon>
        <taxon>Euarchontoglires</taxon>
        <taxon>Primates</taxon>
        <taxon>Haplorrhini</taxon>
        <taxon>Catarrhini</taxon>
        <taxon>Hominidae</taxon>
        <taxon>Homo</taxon>
    </lineage>
</organism>
<accession>Q8NGQ1</accession>
<accession>Q6IF62</accession>
<accession>Q96RA9</accession>
<name>OR9G4_HUMAN</name>
<sequence length="327" mass="36344">MIFPSHDSQAFTSVDMEVGNCTILTEFILLGFSADSQWQPILFGVFLMLYLITLSGNMTLVILIRTDSHLHTPMYFFIGNLSFLDFWYTSVYTPKILASCVSEDKRISLAGCGAQLFFSCVVAYTECYLLAAMAYDRHAAICNPLLYSGTMSTALCTGLVAGSYIGGFLNAIAHTANTFRLHFCGKNIIDHFFCDAPPLVKMSCTNTRVYEKVLLGVVGFTVLSSILAILISYVNILLAILRIHSASGRHKAFSTCASHLISVMLFYGSLLFMYSRPSSTYSLERDKVAALFYTVINPLLNPLIYSLRNKDIKEAFRKATQTIQPQT</sequence>
<feature type="chain" id="PRO_0000150679" description="Olfactory receptor 9G4">
    <location>
        <begin position="1"/>
        <end position="327"/>
    </location>
</feature>
<feature type="topological domain" description="Extracellular" evidence="1">
    <location>
        <begin position="1"/>
        <end position="43"/>
    </location>
</feature>
<feature type="transmembrane region" description="Helical; Name=1" evidence="1">
    <location>
        <begin position="44"/>
        <end position="64"/>
    </location>
</feature>
<feature type="topological domain" description="Cytoplasmic" evidence="1">
    <location>
        <begin position="65"/>
        <end position="71"/>
    </location>
</feature>
<feature type="transmembrane region" description="Helical; Name=2" evidence="1">
    <location>
        <begin position="72"/>
        <end position="92"/>
    </location>
</feature>
<feature type="topological domain" description="Extracellular" evidence="1">
    <location>
        <begin position="93"/>
        <end position="113"/>
    </location>
</feature>
<feature type="transmembrane region" description="Helical; Name=3" evidence="1">
    <location>
        <begin position="114"/>
        <end position="134"/>
    </location>
</feature>
<feature type="topological domain" description="Cytoplasmic" evidence="1">
    <location>
        <begin position="135"/>
        <end position="152"/>
    </location>
</feature>
<feature type="transmembrane region" description="Helical; Name=4" evidence="1">
    <location>
        <begin position="153"/>
        <end position="173"/>
    </location>
</feature>
<feature type="topological domain" description="Extracellular" evidence="1">
    <location>
        <begin position="174"/>
        <end position="212"/>
    </location>
</feature>
<feature type="transmembrane region" description="Helical; Name=5" evidence="1">
    <location>
        <begin position="213"/>
        <end position="233"/>
    </location>
</feature>
<feature type="topological domain" description="Cytoplasmic" evidence="1">
    <location>
        <begin position="234"/>
        <end position="252"/>
    </location>
</feature>
<feature type="transmembrane region" description="Helical; Name=6" evidence="1">
    <location>
        <begin position="253"/>
        <end position="273"/>
    </location>
</feature>
<feature type="topological domain" description="Extracellular" evidence="1">
    <location>
        <begin position="274"/>
        <end position="286"/>
    </location>
</feature>
<feature type="transmembrane region" description="Helical; Name=7" evidence="1">
    <location>
        <begin position="287"/>
        <end position="307"/>
    </location>
</feature>
<feature type="topological domain" description="Cytoplasmic" evidence="1">
    <location>
        <begin position="308"/>
        <end position="327"/>
    </location>
</feature>
<feature type="glycosylation site" description="N-linked (GlcNAc...) asparagine" evidence="1">
    <location>
        <position position="20"/>
    </location>
</feature>
<feature type="disulfide bond" evidence="2">
    <location>
        <begin position="112"/>
        <end position="194"/>
    </location>
</feature>
<feature type="sequence variant" id="VAR_053257" description="In dbSNP:rs11228763.">
    <original>F</original>
    <variation>S</variation>
    <location>
        <position position="43"/>
    </location>
</feature>
<feature type="sequence variant" id="VAR_053258" description="In dbSNP:rs577576.">
    <original>N</original>
    <variation>D</variation>
    <location>
        <position position="206"/>
    </location>
</feature>
<feature type="sequence variant" id="VAR_053259" description="In dbSNP:rs513873.">
    <original>V</original>
    <variation>A</variation>
    <location>
        <position position="222"/>
    </location>
</feature>
<protein>
    <recommendedName>
        <fullName>Olfactory receptor 9G4</fullName>
    </recommendedName>
    <alternativeName>
        <fullName>Olfactory receptor OR11-216</fullName>
    </alternativeName>
</protein>
<proteinExistence type="inferred from homology"/>
<comment type="function">
    <text evidence="3">Odorant receptor.</text>
</comment>
<comment type="subcellular location">
    <subcellularLocation>
        <location>Cell membrane</location>
        <topology>Multi-pass membrane protein</topology>
    </subcellularLocation>
</comment>
<comment type="similarity">
    <text evidence="2">Belongs to the G-protein coupled receptor 1 family.</text>
</comment>
<comment type="caution">
    <text evidence="3">It is uncertain whether Met-1 or Met-16 is the initiator.</text>
</comment>
<comment type="sequence caution" evidence="3">
    <conflict type="erroneous initiation">
        <sequence resource="EMBL-CDS" id="BAC05959"/>
    </conflict>
</comment>
<comment type="online information" name="Human Olfactory Receptor Data Exploratorium (HORDE)">
    <link uri="http://genome.weizmann.ac.il/horde/card/index/symbol:OR9G4"/>
</comment>
<gene>
    <name type="primary">OR9G4</name>
</gene>
<keyword id="KW-1003">Cell membrane</keyword>
<keyword id="KW-1015">Disulfide bond</keyword>
<keyword id="KW-0297">G-protein coupled receptor</keyword>
<keyword id="KW-0325">Glycoprotein</keyword>
<keyword id="KW-0472">Membrane</keyword>
<keyword id="KW-0552">Olfaction</keyword>
<keyword id="KW-0675">Receptor</keyword>
<keyword id="KW-1185">Reference proteome</keyword>
<keyword id="KW-0716">Sensory transduction</keyword>
<keyword id="KW-0807">Transducer</keyword>
<keyword id="KW-0812">Transmembrane</keyword>
<keyword id="KW-1133">Transmembrane helix</keyword>
<reference key="1">
    <citation type="submission" date="2001-07" db="EMBL/GenBank/DDBJ databases">
        <title>Genome-wide discovery and analysis of human seven transmembrane helix receptor genes.</title>
        <authorList>
            <person name="Suwa M."/>
            <person name="Sato T."/>
            <person name="Okouchi I."/>
            <person name="Arita M."/>
            <person name="Futami K."/>
            <person name="Matsumoto S."/>
            <person name="Tsutsumi S."/>
            <person name="Aburatani H."/>
            <person name="Asai K."/>
            <person name="Akiyama Y."/>
        </authorList>
    </citation>
    <scope>NUCLEOTIDE SEQUENCE [GENOMIC DNA]</scope>
</reference>
<reference key="2">
    <citation type="journal article" date="2006" name="Nature">
        <title>Human chromosome 11 DNA sequence and analysis including novel gene identification.</title>
        <authorList>
            <person name="Taylor T.D."/>
            <person name="Noguchi H."/>
            <person name="Totoki Y."/>
            <person name="Toyoda A."/>
            <person name="Kuroki Y."/>
            <person name="Dewar K."/>
            <person name="Lloyd C."/>
            <person name="Itoh T."/>
            <person name="Takeda T."/>
            <person name="Kim D.-W."/>
            <person name="She X."/>
            <person name="Barlow K.F."/>
            <person name="Bloom T."/>
            <person name="Bruford E."/>
            <person name="Chang J.L."/>
            <person name="Cuomo C.A."/>
            <person name="Eichler E."/>
            <person name="FitzGerald M.G."/>
            <person name="Jaffe D.B."/>
            <person name="LaButti K."/>
            <person name="Nicol R."/>
            <person name="Park H.-S."/>
            <person name="Seaman C."/>
            <person name="Sougnez C."/>
            <person name="Yang X."/>
            <person name="Zimmer A.R."/>
            <person name="Zody M.C."/>
            <person name="Birren B.W."/>
            <person name="Nusbaum C."/>
            <person name="Fujiyama A."/>
            <person name="Hattori M."/>
            <person name="Rogers J."/>
            <person name="Lander E.S."/>
            <person name="Sakaki Y."/>
        </authorList>
    </citation>
    <scope>NUCLEOTIDE SEQUENCE [LARGE SCALE GENOMIC DNA]</scope>
</reference>
<reference key="3">
    <citation type="journal article" date="2002" name="Genomics">
        <title>DEFOG: a practical scheme for deciphering families of genes.</title>
        <authorList>
            <person name="Fuchs T."/>
            <person name="Malecova B."/>
            <person name="Linhart C."/>
            <person name="Sharan R."/>
            <person name="Khen M."/>
            <person name="Herwig R."/>
            <person name="Shmulevich D."/>
            <person name="Elkon R."/>
            <person name="Steinfath M."/>
            <person name="O'Brien J.K."/>
            <person name="Radelof U."/>
            <person name="Lehrach H."/>
            <person name="Lancet D."/>
            <person name="Shamir R."/>
        </authorList>
    </citation>
    <scope>NUCLEOTIDE SEQUENCE [GENOMIC DNA] OF 83-299</scope>
</reference>
<reference key="4">
    <citation type="journal article" date="2004" name="Proc. Natl. Acad. Sci. U.S.A.">
        <title>The human olfactory receptor gene family.</title>
        <authorList>
            <person name="Malnic B."/>
            <person name="Godfrey P.A."/>
            <person name="Buck L.B."/>
        </authorList>
    </citation>
    <scope>IDENTIFICATION</scope>
</reference>
<reference key="5">
    <citation type="journal article" date="2004" name="Proc. Natl. Acad. Sci. U.S.A.">
        <authorList>
            <person name="Malnic B."/>
            <person name="Godfrey P.A."/>
            <person name="Buck L.B."/>
        </authorList>
    </citation>
    <scope>ERRATUM OF PUBMED:14983052</scope>
</reference>
<evidence type="ECO:0000255" key="1"/>
<evidence type="ECO:0000255" key="2">
    <source>
        <dbReference type="PROSITE-ProRule" id="PRU00521"/>
    </source>
</evidence>
<evidence type="ECO:0000305" key="3"/>
<dbReference type="EMBL" id="AB065738">
    <property type="protein sequence ID" value="BAC05959.1"/>
    <property type="status" value="ALT_INIT"/>
    <property type="molecule type" value="Genomic_DNA"/>
</dbReference>
<dbReference type="EMBL" id="AP001803">
    <property type="status" value="NOT_ANNOTATED_CDS"/>
    <property type="molecule type" value="Genomic_DNA"/>
</dbReference>
<dbReference type="EMBL" id="AF399530">
    <property type="protein sequence ID" value="AAK95015.1"/>
    <property type="molecule type" value="Genomic_DNA"/>
</dbReference>
<dbReference type="EMBL" id="BK004400">
    <property type="protein sequence ID" value="DAA04798.1"/>
    <property type="molecule type" value="Genomic_DNA"/>
</dbReference>
<dbReference type="RefSeq" id="NP_001005284.1">
    <property type="nucleotide sequence ID" value="NM_001005284.1"/>
</dbReference>
<dbReference type="SMR" id="Q8NGQ1"/>
<dbReference type="FunCoup" id="Q8NGQ1">
    <property type="interactions" value="417"/>
</dbReference>
<dbReference type="STRING" id="9606.ENSP00000307515"/>
<dbReference type="GlyCosmos" id="Q8NGQ1">
    <property type="glycosylation" value="1 site, No reported glycans"/>
</dbReference>
<dbReference type="GlyGen" id="Q8NGQ1">
    <property type="glycosylation" value="1 site"/>
</dbReference>
<dbReference type="BioMuta" id="OR9G4"/>
<dbReference type="DMDM" id="212276456"/>
<dbReference type="MassIVE" id="Q8NGQ1"/>
<dbReference type="PaxDb" id="9606-ENSP00000307515"/>
<dbReference type="DNASU" id="283189"/>
<dbReference type="Ensembl" id="ENST00000575017.3">
    <property type="protein sequence ID" value="ENSP00000459325.1"/>
    <property type="gene ID" value="ENSG00000262647.3"/>
</dbReference>
<dbReference type="GeneID" id="283189"/>
<dbReference type="KEGG" id="hsa:283189"/>
<dbReference type="UCSC" id="uc010rjo.3">
    <property type="organism name" value="human"/>
</dbReference>
<dbReference type="AGR" id="HGNC:15322"/>
<dbReference type="CTD" id="283189"/>
<dbReference type="GeneCards" id="OR9G4"/>
<dbReference type="HGNC" id="HGNC:15322">
    <property type="gene designation" value="OR9G4"/>
</dbReference>
<dbReference type="neXtProt" id="NX_Q8NGQ1"/>
<dbReference type="PharmGKB" id="PA32791"/>
<dbReference type="eggNOG" id="ENOG502SIHB">
    <property type="taxonomic scope" value="Eukaryota"/>
</dbReference>
<dbReference type="HOGENOM" id="CLU_012526_1_0_1"/>
<dbReference type="InParanoid" id="Q8NGQ1"/>
<dbReference type="OrthoDB" id="9008036at2759"/>
<dbReference type="PAN-GO" id="Q8NGQ1">
    <property type="GO annotations" value="4 GO annotations based on evolutionary models"/>
</dbReference>
<dbReference type="PhylomeDB" id="Q8NGQ1"/>
<dbReference type="TreeFam" id="TF352735"/>
<dbReference type="PathwayCommons" id="Q8NGQ1"/>
<dbReference type="Reactome" id="R-HSA-9752946">
    <property type="pathway name" value="Expression and translocation of olfactory receptors"/>
</dbReference>
<dbReference type="BioGRID-ORCS" id="283189">
    <property type="hits" value="4 hits in 738 CRISPR screens"/>
</dbReference>
<dbReference type="GeneWiki" id="OR9G4"/>
<dbReference type="GenomeRNAi" id="283189"/>
<dbReference type="Pharos" id="Q8NGQ1">
    <property type="development level" value="Tdark"/>
</dbReference>
<dbReference type="PRO" id="PR:Q8NGQ1"/>
<dbReference type="Proteomes" id="UP000005640">
    <property type="component" value="Unplaced"/>
</dbReference>
<dbReference type="RNAct" id="Q8NGQ1">
    <property type="molecule type" value="protein"/>
</dbReference>
<dbReference type="GO" id="GO:0005886">
    <property type="term" value="C:plasma membrane"/>
    <property type="evidence" value="ECO:0007669"/>
    <property type="project" value="UniProtKB-SubCell"/>
</dbReference>
<dbReference type="GO" id="GO:0004930">
    <property type="term" value="F:G protein-coupled receptor activity"/>
    <property type="evidence" value="ECO:0007669"/>
    <property type="project" value="UniProtKB-KW"/>
</dbReference>
<dbReference type="GO" id="GO:0005549">
    <property type="term" value="F:odorant binding"/>
    <property type="evidence" value="ECO:0000318"/>
    <property type="project" value="GO_Central"/>
</dbReference>
<dbReference type="GO" id="GO:0004984">
    <property type="term" value="F:olfactory receptor activity"/>
    <property type="evidence" value="ECO:0000318"/>
    <property type="project" value="GO_Central"/>
</dbReference>
<dbReference type="GO" id="GO:0007186">
    <property type="term" value="P:G protein-coupled receptor signaling pathway"/>
    <property type="evidence" value="ECO:0000318"/>
    <property type="project" value="GO_Central"/>
</dbReference>
<dbReference type="GO" id="GO:0007608">
    <property type="term" value="P:sensory perception of smell"/>
    <property type="evidence" value="ECO:0000318"/>
    <property type="project" value="GO_Central"/>
</dbReference>
<dbReference type="CDD" id="cd15418">
    <property type="entry name" value="7tmA_OR9G-like"/>
    <property type="match status" value="1"/>
</dbReference>
<dbReference type="FunFam" id="1.20.1070.10:FF:000003">
    <property type="entry name" value="Olfactory receptor"/>
    <property type="match status" value="1"/>
</dbReference>
<dbReference type="Gene3D" id="1.20.1070.10">
    <property type="entry name" value="Rhodopsin 7-helix transmembrane proteins"/>
    <property type="match status" value="1"/>
</dbReference>
<dbReference type="InterPro" id="IPR000276">
    <property type="entry name" value="GPCR_Rhodpsn"/>
</dbReference>
<dbReference type="InterPro" id="IPR017452">
    <property type="entry name" value="GPCR_Rhodpsn_7TM"/>
</dbReference>
<dbReference type="InterPro" id="IPR000725">
    <property type="entry name" value="Olfact_rcpt"/>
</dbReference>
<dbReference type="PANTHER" id="PTHR48018">
    <property type="entry name" value="OLFACTORY RECEPTOR"/>
    <property type="match status" value="1"/>
</dbReference>
<dbReference type="Pfam" id="PF13853">
    <property type="entry name" value="7tm_4"/>
    <property type="match status" value="1"/>
</dbReference>
<dbReference type="PRINTS" id="PR00237">
    <property type="entry name" value="GPCRRHODOPSN"/>
</dbReference>
<dbReference type="PRINTS" id="PR00245">
    <property type="entry name" value="OLFACTORYR"/>
</dbReference>
<dbReference type="SUPFAM" id="SSF81321">
    <property type="entry name" value="Family A G protein-coupled receptor-like"/>
    <property type="match status" value="1"/>
</dbReference>
<dbReference type="PROSITE" id="PS00237">
    <property type="entry name" value="G_PROTEIN_RECEP_F1_1"/>
    <property type="match status" value="1"/>
</dbReference>
<dbReference type="PROSITE" id="PS50262">
    <property type="entry name" value="G_PROTEIN_RECEP_F1_2"/>
    <property type="match status" value="1"/>
</dbReference>